<reference key="1">
    <citation type="submission" date="2006-09" db="EMBL/GenBank/DDBJ databases">
        <title>Complete sequence of chromosome 1 of Shewanella sp. ANA-3.</title>
        <authorList>
            <person name="Copeland A."/>
            <person name="Lucas S."/>
            <person name="Lapidus A."/>
            <person name="Barry K."/>
            <person name="Detter J.C."/>
            <person name="Glavina del Rio T."/>
            <person name="Hammon N."/>
            <person name="Israni S."/>
            <person name="Dalin E."/>
            <person name="Tice H."/>
            <person name="Pitluck S."/>
            <person name="Chertkov O."/>
            <person name="Brettin T."/>
            <person name="Bruce D."/>
            <person name="Han C."/>
            <person name="Tapia R."/>
            <person name="Gilna P."/>
            <person name="Schmutz J."/>
            <person name="Larimer F."/>
            <person name="Land M."/>
            <person name="Hauser L."/>
            <person name="Kyrpides N."/>
            <person name="Kim E."/>
            <person name="Newman D."/>
            <person name="Salticov C."/>
            <person name="Konstantinidis K."/>
            <person name="Klappenback J."/>
            <person name="Tiedje J."/>
            <person name="Richardson P."/>
        </authorList>
    </citation>
    <scope>NUCLEOTIDE SEQUENCE [LARGE SCALE GENOMIC DNA]</scope>
    <source>
        <strain>ANA-3</strain>
    </source>
</reference>
<sequence>MYAVFQSGGKQHRVAPGHTVRLEKLEVATGSTVEFDQVLLIADGEKVHVGAPLVAGGKVVAEVVSHGRGEKVTIVKFRRRKHHDKKLGHRQWFTEVKITAINA</sequence>
<gene>
    <name evidence="1" type="primary">rplU</name>
    <name type="ordered locus">Shewana3_3219</name>
</gene>
<accession>A0L074</accession>
<evidence type="ECO:0000255" key="1">
    <source>
        <dbReference type="HAMAP-Rule" id="MF_01363"/>
    </source>
</evidence>
<evidence type="ECO:0000305" key="2"/>
<feature type="chain" id="PRO_1000067898" description="Large ribosomal subunit protein bL21">
    <location>
        <begin position="1"/>
        <end position="103"/>
    </location>
</feature>
<comment type="function">
    <text evidence="1">This protein binds to 23S rRNA in the presence of protein L20.</text>
</comment>
<comment type="subunit">
    <text evidence="1">Part of the 50S ribosomal subunit. Contacts protein L20.</text>
</comment>
<comment type="similarity">
    <text evidence="1">Belongs to the bacterial ribosomal protein bL21 family.</text>
</comment>
<organism>
    <name type="scientific">Shewanella sp. (strain ANA-3)</name>
    <dbReference type="NCBI Taxonomy" id="94122"/>
    <lineage>
        <taxon>Bacteria</taxon>
        <taxon>Pseudomonadati</taxon>
        <taxon>Pseudomonadota</taxon>
        <taxon>Gammaproteobacteria</taxon>
        <taxon>Alteromonadales</taxon>
        <taxon>Shewanellaceae</taxon>
        <taxon>Shewanella</taxon>
    </lineage>
</organism>
<proteinExistence type="inferred from homology"/>
<name>RL21_SHESA</name>
<dbReference type="EMBL" id="CP000469">
    <property type="protein sequence ID" value="ABK49443.1"/>
    <property type="molecule type" value="Genomic_DNA"/>
</dbReference>
<dbReference type="RefSeq" id="WP_011073451.1">
    <property type="nucleotide sequence ID" value="NC_008577.1"/>
</dbReference>
<dbReference type="SMR" id="A0L074"/>
<dbReference type="STRING" id="94122.Shewana3_3219"/>
<dbReference type="GeneID" id="94729147"/>
<dbReference type="KEGG" id="shn:Shewana3_3219"/>
<dbReference type="eggNOG" id="COG0261">
    <property type="taxonomic scope" value="Bacteria"/>
</dbReference>
<dbReference type="HOGENOM" id="CLU_061463_3_3_6"/>
<dbReference type="OrthoDB" id="9813334at2"/>
<dbReference type="Proteomes" id="UP000002589">
    <property type="component" value="Chromosome"/>
</dbReference>
<dbReference type="GO" id="GO:0005737">
    <property type="term" value="C:cytoplasm"/>
    <property type="evidence" value="ECO:0007669"/>
    <property type="project" value="UniProtKB-ARBA"/>
</dbReference>
<dbReference type="GO" id="GO:1990904">
    <property type="term" value="C:ribonucleoprotein complex"/>
    <property type="evidence" value="ECO:0007669"/>
    <property type="project" value="UniProtKB-KW"/>
</dbReference>
<dbReference type="GO" id="GO:0005840">
    <property type="term" value="C:ribosome"/>
    <property type="evidence" value="ECO:0007669"/>
    <property type="project" value="UniProtKB-KW"/>
</dbReference>
<dbReference type="GO" id="GO:0019843">
    <property type="term" value="F:rRNA binding"/>
    <property type="evidence" value="ECO:0007669"/>
    <property type="project" value="UniProtKB-UniRule"/>
</dbReference>
<dbReference type="GO" id="GO:0003735">
    <property type="term" value="F:structural constituent of ribosome"/>
    <property type="evidence" value="ECO:0007669"/>
    <property type="project" value="InterPro"/>
</dbReference>
<dbReference type="GO" id="GO:0006412">
    <property type="term" value="P:translation"/>
    <property type="evidence" value="ECO:0007669"/>
    <property type="project" value="UniProtKB-UniRule"/>
</dbReference>
<dbReference type="HAMAP" id="MF_01363">
    <property type="entry name" value="Ribosomal_bL21"/>
    <property type="match status" value="1"/>
</dbReference>
<dbReference type="InterPro" id="IPR028909">
    <property type="entry name" value="bL21-like"/>
</dbReference>
<dbReference type="InterPro" id="IPR036164">
    <property type="entry name" value="bL21-like_sf"/>
</dbReference>
<dbReference type="InterPro" id="IPR001787">
    <property type="entry name" value="Ribosomal_bL21"/>
</dbReference>
<dbReference type="InterPro" id="IPR018258">
    <property type="entry name" value="Ribosomal_bL21_CS"/>
</dbReference>
<dbReference type="NCBIfam" id="TIGR00061">
    <property type="entry name" value="L21"/>
    <property type="match status" value="1"/>
</dbReference>
<dbReference type="PANTHER" id="PTHR21349">
    <property type="entry name" value="50S RIBOSOMAL PROTEIN L21"/>
    <property type="match status" value="1"/>
</dbReference>
<dbReference type="PANTHER" id="PTHR21349:SF0">
    <property type="entry name" value="LARGE RIBOSOMAL SUBUNIT PROTEIN BL21M"/>
    <property type="match status" value="1"/>
</dbReference>
<dbReference type="Pfam" id="PF00829">
    <property type="entry name" value="Ribosomal_L21p"/>
    <property type="match status" value="1"/>
</dbReference>
<dbReference type="SUPFAM" id="SSF141091">
    <property type="entry name" value="L21p-like"/>
    <property type="match status" value="1"/>
</dbReference>
<dbReference type="PROSITE" id="PS01169">
    <property type="entry name" value="RIBOSOMAL_L21"/>
    <property type="match status" value="1"/>
</dbReference>
<keyword id="KW-0687">Ribonucleoprotein</keyword>
<keyword id="KW-0689">Ribosomal protein</keyword>
<keyword id="KW-0694">RNA-binding</keyword>
<keyword id="KW-0699">rRNA-binding</keyword>
<protein>
    <recommendedName>
        <fullName evidence="1">Large ribosomal subunit protein bL21</fullName>
    </recommendedName>
    <alternativeName>
        <fullName evidence="2">50S ribosomal protein L21</fullName>
    </alternativeName>
</protein>